<proteinExistence type="evidence at transcript level"/>
<name>MTRF1_ARATH</name>
<keyword id="KW-0025">Alternative splicing</keyword>
<keyword id="KW-0488">Methylation</keyword>
<keyword id="KW-0496">Mitochondrion</keyword>
<keyword id="KW-0648">Protein biosynthesis</keyword>
<keyword id="KW-1185">Reference proteome</keyword>
<keyword id="KW-0809">Transit peptide</keyword>
<sequence length="413" mass="46828">MRVLIRPNFLSNLIRYCSRGTHSHDRSLRSVLSSNMIRLYTTGMEPQLSPDLIKIMDQRLSAIEHRNAVLQKLINQPEYSPEEFSRANKELRKLRDSMLLINDLRAKQKEIDGLKSLVSESSDDKDMLDLAVGELDEAVEEEKRLQTLLLKSLLPKDEADERDCILEVRAGTGGEEASLFAMDIFRMYERYSQKKGWKFDIVDITESDMKGYKEASAAICGASVYGKLKFESGIHRVQRIPITEKSGRIHTSAISVAILPQADEVDVQLRNEDLRIDTYRSGGSGGQHANTTNSAVRIIHLPTGMMVSIQDERSQHMNRAKALKVLCARLYEIERLRIQSSRSKLRSDQIGSGDRSGRIRTYNFPQGRVTDHRVGITHHAIEDMMQGENLDMFIDALLLRQEMDAIASFSSTS</sequence>
<comment type="function">
    <text evidence="4">Peptide chain release factor 1 directs the termination of translation in response to the peptide chain termination codons UAG and UAA in mitochondria.</text>
</comment>
<comment type="subcellular location">
    <subcellularLocation>
        <location evidence="2">Mitochondrion</location>
    </subcellularLocation>
</comment>
<comment type="alternative products">
    <event type="alternative splicing"/>
    <isoform>
        <id>A2RVR7-1</id>
        <name>1</name>
        <sequence type="displayed"/>
    </isoform>
    <isoform>
        <id>A2RVR7-2</id>
        <name>2</name>
        <sequence type="described" ref="VSP_060804 VSP_060805 VSP_060806"/>
    </isoform>
</comment>
<comment type="tissue specificity">
    <text evidence="3">Mostly expressed in seedlings, stems and adult plants, and, to a lower extent, in siliques (PubMed:17450416). Barely detected in etiolated seedlings and roots (PubMed:17450416).</text>
</comment>
<comment type="PTM">
    <text evidence="1">Methylation increases the termination efficiency of RF1.</text>
</comment>
<comment type="similarity">
    <text evidence="4">Belongs to the prokaryotic/mitochondrial release factor family.</text>
</comment>
<comment type="sequence caution" evidence="4">
    <conflict type="erroneous gene model prediction">
        <sequence resource="EMBL-CDS" id="AAC34223"/>
    </conflict>
</comment>
<organism>
    <name type="scientific">Arabidopsis thaliana</name>
    <name type="common">Mouse-ear cress</name>
    <dbReference type="NCBI Taxonomy" id="3702"/>
    <lineage>
        <taxon>Eukaryota</taxon>
        <taxon>Viridiplantae</taxon>
        <taxon>Streptophyta</taxon>
        <taxon>Embryophyta</taxon>
        <taxon>Tracheophyta</taxon>
        <taxon>Spermatophyta</taxon>
        <taxon>Magnoliopsida</taxon>
        <taxon>eudicotyledons</taxon>
        <taxon>Gunneridae</taxon>
        <taxon>Pentapetalae</taxon>
        <taxon>rosids</taxon>
        <taxon>malvids</taxon>
        <taxon>Brassicales</taxon>
        <taxon>Brassicaceae</taxon>
        <taxon>Camelineae</taxon>
        <taxon>Arabidopsis</taxon>
    </lineage>
</organism>
<dbReference type="EMBL" id="AC004411">
    <property type="protein sequence ID" value="AAC34223.1"/>
    <property type="status" value="ALT_SEQ"/>
    <property type="molecule type" value="Genomic_DNA"/>
</dbReference>
<dbReference type="EMBL" id="CP002685">
    <property type="protein sequence ID" value="AEC10789.1"/>
    <property type="molecule type" value="Genomic_DNA"/>
</dbReference>
<dbReference type="EMBL" id="AK228004">
    <property type="protein sequence ID" value="BAE99969.1"/>
    <property type="molecule type" value="mRNA"/>
</dbReference>
<dbReference type="EMBL" id="BT030058">
    <property type="protein sequence ID" value="ABN04796.1"/>
    <property type="molecule type" value="mRNA"/>
</dbReference>
<dbReference type="PIR" id="T02185">
    <property type="entry name" value="T02185"/>
</dbReference>
<dbReference type="RefSeq" id="NP_182225.3">
    <molecule id="A2RVR7-1"/>
    <property type="nucleotide sequence ID" value="NM_130270.4"/>
</dbReference>
<dbReference type="SMR" id="A2RVR7"/>
<dbReference type="FunCoup" id="A2RVR7">
    <property type="interactions" value="3461"/>
</dbReference>
<dbReference type="PaxDb" id="3702-AT2G47020.1"/>
<dbReference type="ProteomicsDB" id="189205">
    <molecule id="A2RVR7-1"/>
</dbReference>
<dbReference type="EnsemblPlants" id="AT2G47020.1">
    <molecule id="A2RVR7-1"/>
    <property type="protein sequence ID" value="AT2G47020.1"/>
    <property type="gene ID" value="AT2G47020"/>
</dbReference>
<dbReference type="GeneID" id="819316"/>
<dbReference type="Gramene" id="AT2G47020.1">
    <molecule id="A2RVR7-1"/>
    <property type="protein sequence ID" value="AT2G47020.1"/>
    <property type="gene ID" value="AT2G47020"/>
</dbReference>
<dbReference type="KEGG" id="ath:AT2G47020"/>
<dbReference type="Araport" id="AT2G47020"/>
<dbReference type="TAIR" id="AT2G47020"/>
<dbReference type="eggNOG" id="KOG2726">
    <property type="taxonomic scope" value="Eukaryota"/>
</dbReference>
<dbReference type="HOGENOM" id="CLU_036856_0_2_1"/>
<dbReference type="InParanoid" id="A2RVR7"/>
<dbReference type="PhylomeDB" id="A2RVR7"/>
<dbReference type="PRO" id="PR:A2RVR7"/>
<dbReference type="Proteomes" id="UP000006548">
    <property type="component" value="Chromosome 2"/>
</dbReference>
<dbReference type="ExpressionAtlas" id="A2RVR7">
    <property type="expression patterns" value="baseline and differential"/>
</dbReference>
<dbReference type="GO" id="GO:0005739">
    <property type="term" value="C:mitochondrion"/>
    <property type="evidence" value="ECO:0007669"/>
    <property type="project" value="UniProtKB-SubCell"/>
</dbReference>
<dbReference type="GO" id="GO:0016149">
    <property type="term" value="F:translation release factor activity, codon specific"/>
    <property type="evidence" value="ECO:0007669"/>
    <property type="project" value="InterPro"/>
</dbReference>
<dbReference type="FunFam" id="3.30.160.20:FF:000004">
    <property type="entry name" value="Peptide chain release factor 1"/>
    <property type="match status" value="1"/>
</dbReference>
<dbReference type="FunFam" id="3.30.70.1660:FF:000002">
    <property type="entry name" value="Peptide chain release factor 1"/>
    <property type="match status" value="1"/>
</dbReference>
<dbReference type="Gene3D" id="3.30.160.20">
    <property type="match status" value="1"/>
</dbReference>
<dbReference type="Gene3D" id="3.30.70.1660">
    <property type="match status" value="1"/>
</dbReference>
<dbReference type="Gene3D" id="6.10.140.1950">
    <property type="match status" value="1"/>
</dbReference>
<dbReference type="HAMAP" id="MF_00093">
    <property type="entry name" value="Rel_fac_1"/>
    <property type="match status" value="1"/>
</dbReference>
<dbReference type="InterPro" id="IPR005139">
    <property type="entry name" value="PCRF"/>
</dbReference>
<dbReference type="InterPro" id="IPR000352">
    <property type="entry name" value="Pep_chain_release_fac_I"/>
</dbReference>
<dbReference type="InterPro" id="IPR045853">
    <property type="entry name" value="Pep_chain_release_fac_I_sf"/>
</dbReference>
<dbReference type="InterPro" id="IPR050057">
    <property type="entry name" value="Prokaryotic/Mito_RF"/>
</dbReference>
<dbReference type="InterPro" id="IPR004373">
    <property type="entry name" value="RF-1"/>
</dbReference>
<dbReference type="NCBIfam" id="TIGR00019">
    <property type="entry name" value="prfA"/>
    <property type="match status" value="1"/>
</dbReference>
<dbReference type="NCBIfam" id="NF001859">
    <property type="entry name" value="PRK00591.1"/>
    <property type="match status" value="1"/>
</dbReference>
<dbReference type="PANTHER" id="PTHR43804">
    <property type="entry name" value="LD18447P"/>
    <property type="match status" value="1"/>
</dbReference>
<dbReference type="PANTHER" id="PTHR43804:SF7">
    <property type="entry name" value="LD18447P"/>
    <property type="match status" value="1"/>
</dbReference>
<dbReference type="Pfam" id="PF03462">
    <property type="entry name" value="PCRF"/>
    <property type="match status" value="1"/>
</dbReference>
<dbReference type="Pfam" id="PF00472">
    <property type="entry name" value="RF-1"/>
    <property type="match status" value="1"/>
</dbReference>
<dbReference type="SMART" id="SM00937">
    <property type="entry name" value="PCRF"/>
    <property type="match status" value="1"/>
</dbReference>
<dbReference type="SUPFAM" id="SSF75620">
    <property type="entry name" value="Release factor"/>
    <property type="match status" value="1"/>
</dbReference>
<accession>A2RVR7</accession>
<accession>O80723</accession>
<accession>Q0WSC9</accession>
<accession>Q304B8</accession>
<protein>
    <recommendedName>
        <fullName evidence="4">Peptide chain release factor 1, mitochondrial</fullName>
        <shortName evidence="4">AtmtRF1</shortName>
    </recommendedName>
</protein>
<gene>
    <name evidence="5" type="ordered locus">At2g47020</name>
    <name evidence="6" type="ORF">F14M4.15</name>
</gene>
<feature type="transit peptide" description="Mitochondrion" evidence="2">
    <location>
        <begin position="1"/>
        <end position="40"/>
    </location>
</feature>
<feature type="chain" id="PRO_0000451567" description="Peptide chain release factor 1, mitochondrial">
    <location>
        <begin position="41"/>
        <end position="413"/>
    </location>
</feature>
<feature type="modified residue" description="N5-methylglutamine" evidence="1">
    <location>
        <position position="287"/>
    </location>
</feature>
<feature type="splice variant" id="VSP_060804" description="In isoform 2.">
    <original>MRVLIRPNFLSNLIRYCSRGTHSHDRSLRSVLSSNMIRLYTTGMEPQLSPDLIKIMDQRLSAIEHRNAVLQKLIN</original>
    <variation>MLSFRSLSTR</variation>
    <location>
        <begin position="1"/>
        <end position="75"/>
    </location>
</feature>
<feature type="splice variant" id="VSP_060805" description="In isoform 2.">
    <original>NRAK</original>
    <variation>SQST</variation>
    <location>
        <begin position="318"/>
        <end position="321"/>
    </location>
</feature>
<feature type="splice variant" id="VSP_060806" description="In isoform 2.">
    <location>
        <begin position="322"/>
        <end position="413"/>
    </location>
</feature>
<reference key="1">
    <citation type="journal article" date="1999" name="Nature">
        <title>Sequence and analysis of chromosome 2 of the plant Arabidopsis thaliana.</title>
        <authorList>
            <person name="Lin X."/>
            <person name="Kaul S."/>
            <person name="Rounsley S.D."/>
            <person name="Shea T.P."/>
            <person name="Benito M.-I."/>
            <person name="Town C.D."/>
            <person name="Fujii C.Y."/>
            <person name="Mason T.M."/>
            <person name="Bowman C.L."/>
            <person name="Barnstead M.E."/>
            <person name="Feldblyum T.V."/>
            <person name="Buell C.R."/>
            <person name="Ketchum K.A."/>
            <person name="Lee J.J."/>
            <person name="Ronning C.M."/>
            <person name="Koo H.L."/>
            <person name="Moffat K.S."/>
            <person name="Cronin L.A."/>
            <person name="Shen M."/>
            <person name="Pai G."/>
            <person name="Van Aken S."/>
            <person name="Umayam L."/>
            <person name="Tallon L.J."/>
            <person name="Gill J.E."/>
            <person name="Adams M.D."/>
            <person name="Carrera A.J."/>
            <person name="Creasy T.H."/>
            <person name="Goodman H.M."/>
            <person name="Somerville C.R."/>
            <person name="Copenhaver G.P."/>
            <person name="Preuss D."/>
            <person name="Nierman W.C."/>
            <person name="White O."/>
            <person name="Eisen J.A."/>
            <person name="Salzberg S.L."/>
            <person name="Fraser C.M."/>
            <person name="Venter J.C."/>
        </authorList>
    </citation>
    <scope>NUCLEOTIDE SEQUENCE [LARGE SCALE GENOMIC DNA]</scope>
    <source>
        <strain>cv. Columbia</strain>
    </source>
</reference>
<reference key="2">
    <citation type="journal article" date="2017" name="Plant J.">
        <title>Araport11: a complete reannotation of the Arabidopsis thaliana reference genome.</title>
        <authorList>
            <person name="Cheng C.Y."/>
            <person name="Krishnakumar V."/>
            <person name="Chan A.P."/>
            <person name="Thibaud-Nissen F."/>
            <person name="Schobel S."/>
            <person name="Town C.D."/>
        </authorList>
    </citation>
    <scope>GENOME REANNOTATION</scope>
    <source>
        <strain>cv. Columbia</strain>
    </source>
</reference>
<reference key="3">
    <citation type="submission" date="2006-07" db="EMBL/GenBank/DDBJ databases">
        <title>Large-scale analysis of RIKEN Arabidopsis full-length (RAFL) cDNAs.</title>
        <authorList>
            <person name="Totoki Y."/>
            <person name="Seki M."/>
            <person name="Ishida J."/>
            <person name="Nakajima M."/>
            <person name="Enju A."/>
            <person name="Kamiya A."/>
            <person name="Narusaka M."/>
            <person name="Shin-i T."/>
            <person name="Nakagawa M."/>
            <person name="Sakamoto N."/>
            <person name="Oishi K."/>
            <person name="Kohara Y."/>
            <person name="Kobayashi M."/>
            <person name="Toyoda A."/>
            <person name="Sakaki Y."/>
            <person name="Sakurai T."/>
            <person name="Iida K."/>
            <person name="Akiyama K."/>
            <person name="Satou M."/>
            <person name="Toyoda T."/>
            <person name="Konagaya A."/>
            <person name="Carninci P."/>
            <person name="Kawai J."/>
            <person name="Hayashizaki Y."/>
            <person name="Shinozaki K."/>
        </authorList>
    </citation>
    <scope>NUCLEOTIDE SEQUENCE [LARGE SCALE MRNA] (ISOFORM 2)</scope>
    <source>
        <strain>cv. Columbia</strain>
    </source>
</reference>
<reference key="4">
    <citation type="submission" date="2007-01" db="EMBL/GenBank/DDBJ databases">
        <title>Arabidopsis ORF clones.</title>
        <authorList>
            <person name="Bautista V.R."/>
            <person name="Kim C.J."/>
            <person name="Chen H."/>
            <person name="Wu S.Y."/>
            <person name="De Los Reyes C."/>
            <person name="Ecker J.R."/>
        </authorList>
    </citation>
    <scope>NUCLEOTIDE SEQUENCE [LARGE SCALE MRNA] (ISOFORM 1)</scope>
    <source>
        <strain>cv. Columbia</strain>
    </source>
</reference>
<reference key="5">
    <citation type="journal article" date="2007" name="Plant Mol. Biol.">
        <title>Chloroplast ribosome release factor 1 (AtcpRF1) is essential for chloroplast development.</title>
        <authorList>
            <person name="Motohashi R."/>
            <person name="Yamazaki T."/>
            <person name="Myouga F."/>
            <person name="Ito T."/>
            <person name="Ito K."/>
            <person name="Satou M."/>
            <person name="Kobayashi M."/>
            <person name="Nagata N."/>
            <person name="Yoshida S."/>
            <person name="Nagashima A."/>
            <person name="Tanaka K."/>
            <person name="Takahashi S."/>
            <person name="Shinozaki K."/>
        </authorList>
    </citation>
    <scope>TISSUE SPECIFICITY</scope>
    <source>
        <strain>cv. Columbia</strain>
        <strain>cv. No-0</strain>
    </source>
</reference>
<evidence type="ECO:0000250" key="1">
    <source>
        <dbReference type="UniProtKB" id="P0A7I0"/>
    </source>
</evidence>
<evidence type="ECO:0000255" key="2"/>
<evidence type="ECO:0000269" key="3">
    <source>
    </source>
</evidence>
<evidence type="ECO:0000305" key="4"/>
<evidence type="ECO:0000312" key="5">
    <source>
        <dbReference type="Araport" id="AT2G47020"/>
    </source>
</evidence>
<evidence type="ECO:0000312" key="6">
    <source>
        <dbReference type="EMBL" id="AAC34223.1"/>
    </source>
</evidence>